<keyword id="KW-0997">Cell inner membrane</keyword>
<keyword id="KW-1003">Cell membrane</keyword>
<keyword id="KW-0407">Ion channel</keyword>
<keyword id="KW-0406">Ion transport</keyword>
<keyword id="KW-0472">Membrane</keyword>
<keyword id="KW-0479">Metal-binding</keyword>
<keyword id="KW-0915">Sodium</keyword>
<keyword id="KW-0812">Transmembrane</keyword>
<keyword id="KW-1133">Transmembrane helix</keyword>
<keyword id="KW-0813">Transport</keyword>
<proteinExistence type="inferred from homology"/>
<protein>
    <recommendedName>
        <fullName evidence="1">Fluoride-specific ion channel FluC</fullName>
    </recommendedName>
</protein>
<dbReference type="EMBL" id="FM200053">
    <property type="protein sequence ID" value="CAR60157.1"/>
    <property type="molecule type" value="Genomic_DNA"/>
</dbReference>
<dbReference type="RefSeq" id="WP_000939753.1">
    <property type="nucleotide sequence ID" value="NC_011147.1"/>
</dbReference>
<dbReference type="SMR" id="B5BCG4"/>
<dbReference type="KEGG" id="sek:SSPA1956"/>
<dbReference type="HOGENOM" id="CLU_114342_3_3_6"/>
<dbReference type="Proteomes" id="UP000001869">
    <property type="component" value="Chromosome"/>
</dbReference>
<dbReference type="GO" id="GO:0005886">
    <property type="term" value="C:plasma membrane"/>
    <property type="evidence" value="ECO:0007669"/>
    <property type="project" value="UniProtKB-SubCell"/>
</dbReference>
<dbReference type="GO" id="GO:0062054">
    <property type="term" value="F:fluoride channel activity"/>
    <property type="evidence" value="ECO:0007669"/>
    <property type="project" value="UniProtKB-UniRule"/>
</dbReference>
<dbReference type="GO" id="GO:0046872">
    <property type="term" value="F:metal ion binding"/>
    <property type="evidence" value="ECO:0007669"/>
    <property type="project" value="UniProtKB-KW"/>
</dbReference>
<dbReference type="GO" id="GO:0140114">
    <property type="term" value="P:cellular detoxification of fluoride"/>
    <property type="evidence" value="ECO:0007669"/>
    <property type="project" value="UniProtKB-UniRule"/>
</dbReference>
<dbReference type="HAMAP" id="MF_00454">
    <property type="entry name" value="FluC"/>
    <property type="match status" value="1"/>
</dbReference>
<dbReference type="InterPro" id="IPR003691">
    <property type="entry name" value="FluC"/>
</dbReference>
<dbReference type="NCBIfam" id="TIGR00494">
    <property type="entry name" value="crcB"/>
    <property type="match status" value="1"/>
</dbReference>
<dbReference type="NCBIfam" id="NF010792">
    <property type="entry name" value="PRK14196.1"/>
    <property type="match status" value="1"/>
</dbReference>
<dbReference type="PANTHER" id="PTHR28259">
    <property type="entry name" value="FLUORIDE EXPORT PROTEIN 1-RELATED"/>
    <property type="match status" value="1"/>
</dbReference>
<dbReference type="PANTHER" id="PTHR28259:SF1">
    <property type="entry name" value="FLUORIDE EXPORT PROTEIN 1-RELATED"/>
    <property type="match status" value="1"/>
</dbReference>
<dbReference type="Pfam" id="PF02537">
    <property type="entry name" value="CRCB"/>
    <property type="match status" value="1"/>
</dbReference>
<accession>B5BCG4</accession>
<name>FLUC_SALPK</name>
<reference key="1">
    <citation type="journal article" date="2009" name="BMC Genomics">
        <title>Pseudogene accumulation in the evolutionary histories of Salmonella enterica serovars Paratyphi A and Typhi.</title>
        <authorList>
            <person name="Holt K.E."/>
            <person name="Thomson N.R."/>
            <person name="Wain J."/>
            <person name="Langridge G.C."/>
            <person name="Hasan R."/>
            <person name="Bhutta Z.A."/>
            <person name="Quail M.A."/>
            <person name="Norbertczak H."/>
            <person name="Walker D."/>
            <person name="Simmonds M."/>
            <person name="White B."/>
            <person name="Bason N."/>
            <person name="Mungall K."/>
            <person name="Dougan G."/>
            <person name="Parkhill J."/>
        </authorList>
    </citation>
    <scope>NUCLEOTIDE SEQUENCE [LARGE SCALE GENOMIC DNA]</scope>
    <source>
        <strain>AKU_12601</strain>
    </source>
</reference>
<comment type="function">
    <text evidence="1">Fluoride-specific ion channel. Important for reducing fluoride concentration in the cell, thus reducing its toxicity.</text>
</comment>
<comment type="catalytic activity">
    <reaction evidence="1">
        <text>fluoride(in) = fluoride(out)</text>
        <dbReference type="Rhea" id="RHEA:76159"/>
        <dbReference type="ChEBI" id="CHEBI:17051"/>
    </reaction>
    <physiologicalReaction direction="left-to-right" evidence="1">
        <dbReference type="Rhea" id="RHEA:76160"/>
    </physiologicalReaction>
</comment>
<comment type="activity regulation">
    <text evidence="1">Na(+) is not transported, but it plays an essential structural role and its presence is essential for fluoride channel function.</text>
</comment>
<comment type="subcellular location">
    <subcellularLocation>
        <location evidence="1">Cell inner membrane</location>
        <topology evidence="1">Multi-pass membrane protein</topology>
    </subcellularLocation>
</comment>
<comment type="similarity">
    <text evidence="1">Belongs to the fluoride channel Fluc/FEX (TC 1.A.43) family.</text>
</comment>
<organism>
    <name type="scientific">Salmonella paratyphi A (strain AKU_12601)</name>
    <dbReference type="NCBI Taxonomy" id="554290"/>
    <lineage>
        <taxon>Bacteria</taxon>
        <taxon>Pseudomonadati</taxon>
        <taxon>Pseudomonadota</taxon>
        <taxon>Gammaproteobacteria</taxon>
        <taxon>Enterobacterales</taxon>
        <taxon>Enterobacteriaceae</taxon>
        <taxon>Salmonella</taxon>
    </lineage>
</organism>
<gene>
    <name evidence="1" type="primary">fluC</name>
    <name evidence="1" type="synonym">crcB</name>
    <name type="ordered locus">SSPA1956</name>
</gene>
<evidence type="ECO:0000255" key="1">
    <source>
        <dbReference type="HAMAP-Rule" id="MF_00454"/>
    </source>
</evidence>
<feature type="chain" id="PRO_1000125156" description="Fluoride-specific ion channel FluC">
    <location>
        <begin position="1"/>
        <end position="127"/>
    </location>
</feature>
<feature type="transmembrane region" description="Helical" evidence="1">
    <location>
        <begin position="4"/>
        <end position="24"/>
    </location>
</feature>
<feature type="transmembrane region" description="Helical" evidence="1">
    <location>
        <begin position="35"/>
        <end position="55"/>
    </location>
</feature>
<feature type="transmembrane region" description="Helical" evidence="1">
    <location>
        <begin position="71"/>
        <end position="91"/>
    </location>
</feature>
<feature type="transmembrane region" description="Helical" evidence="1">
    <location>
        <begin position="103"/>
        <end position="123"/>
    </location>
</feature>
<feature type="binding site" evidence="1">
    <location>
        <position position="75"/>
    </location>
    <ligand>
        <name>Na(+)</name>
        <dbReference type="ChEBI" id="CHEBI:29101"/>
        <note>structural</note>
    </ligand>
</feature>
<feature type="binding site" evidence="1">
    <location>
        <position position="78"/>
    </location>
    <ligand>
        <name>Na(+)</name>
        <dbReference type="ChEBI" id="CHEBI:29101"/>
        <note>structural</note>
    </ligand>
</feature>
<sequence>MLQLLLAVFIGGGTGSVARWMLSMRFNPLHQAIPIGTLTANLLGAFIIGMGFAWFNRMTHIDPMWKVLITTGFCGGLTTFSTFSAEVVFLLQEGRFGWALLNVLINLLGSFAMTALAFWLFSAAAAR</sequence>